<evidence type="ECO:0000269" key="1">
    <source>
    </source>
</evidence>
<evidence type="ECO:0000305" key="2"/>
<name>C_VSIVA</name>
<reference key="1">
    <citation type="journal article" date="1981" name="J. Virol.">
        <title>Nucleotide sequences of the mRNA's encoding the vesicular stomatitis virus G and M proteins determined from cDNA clones containing the complete coding regions.</title>
        <authorList>
            <person name="Rose J.K."/>
            <person name="Gallione C.J."/>
        </authorList>
    </citation>
    <scope>NUCLEOTIDE SEQUENCE [GENOMIC RNA]</scope>
</reference>
<reference key="2">
    <citation type="journal article" date="1996" name="Virology">
        <title>Identification of a set of proteins (C' and C) encoded by the bicistronic P gene of the Indiana serotype of vesicular stomatitis virus and analysis of their effect on transcription by the viral RNA polymerase.</title>
        <authorList>
            <person name="Peluso R.W."/>
            <person name="Richardson J.C."/>
            <person name="Talon J."/>
            <person name="Lock M."/>
        </authorList>
    </citation>
    <scope>ALTERNATIVE INITIATION</scope>
    <scope>FUNCTION</scope>
</reference>
<keyword id="KW-0024">Alternative initiation</keyword>
<keyword id="KW-1185">Reference proteome</keyword>
<protein>
    <recommendedName>
        <fullName>Protein C'</fullName>
    </recommendedName>
</protein>
<feature type="chain" id="PRO_0000288656" description="Protein C'">
    <location>
        <begin position="1"/>
        <end position="67"/>
    </location>
</feature>
<feature type="splice variant" id="VSP_025749" description="In isoform C." evidence="2">
    <location>
        <begin position="1"/>
        <end position="12"/>
    </location>
</feature>
<organism>
    <name type="scientific">Vesicular stomatitis Indiana virus (strain San Juan)</name>
    <name type="common">VSIV</name>
    <dbReference type="NCBI Taxonomy" id="11285"/>
    <lineage>
        <taxon>Viruses</taxon>
        <taxon>Riboviria</taxon>
        <taxon>Orthornavirae</taxon>
        <taxon>Negarnaviricota</taxon>
        <taxon>Haploviricotina</taxon>
        <taxon>Monjiviricetes</taxon>
        <taxon>Mononegavirales</taxon>
        <taxon>Rhabdoviridae</taxon>
        <taxon>Alpharhabdovirinae</taxon>
        <taxon>Vesiculovirus</taxon>
        <taxon>Vesiculovirus indiana</taxon>
    </lineage>
</organism>
<proteinExistence type="inferred from homology"/>
<dbReference type="EMBL" id="J02428">
    <property type="status" value="NOT_ANNOTATED_CDS"/>
    <property type="molecule type" value="Genomic_RNA"/>
</dbReference>
<dbReference type="SMR" id="P0C2X2"/>
<dbReference type="Proteomes" id="UP000002327">
    <property type="component" value="Segment"/>
</dbReference>
<gene>
    <name type="primary">P</name>
</gene>
<sequence length="67" mass="7999">MRSKHNELKSPIMSCSKRMEWKSILSPLIFRQQMILTQNLNQKLKTIKVCMHRIQKLSKLKALYRGL</sequence>
<organismHost>
    <name type="scientific">Aedes</name>
    <dbReference type="NCBI Taxonomy" id="7158"/>
</organismHost>
<organismHost>
    <name type="scientific">Bos taurus</name>
    <name type="common">Bovine</name>
    <dbReference type="NCBI Taxonomy" id="9913"/>
</organismHost>
<organismHost>
    <name type="scientific">Culicoides</name>
    <dbReference type="NCBI Taxonomy" id="58271"/>
</organismHost>
<organismHost>
    <name type="scientific">Equus asinus</name>
    <name type="common">Donkey</name>
    <name type="synonym">Equus africanus asinus</name>
    <dbReference type="NCBI Taxonomy" id="9793"/>
</organismHost>
<organismHost>
    <name type="scientific">Equus caballus</name>
    <name type="common">Horse</name>
    <dbReference type="NCBI Taxonomy" id="9796"/>
</organismHost>
<organismHost>
    <name type="scientific">Homo sapiens</name>
    <name type="common">Human</name>
    <dbReference type="NCBI Taxonomy" id="9606"/>
</organismHost>
<organismHost>
    <name type="scientific">Lutzomyia</name>
    <dbReference type="NCBI Taxonomy" id="252607"/>
</organismHost>
<organismHost>
    <name type="scientific">Musca domestica</name>
    <name type="common">House fly</name>
    <dbReference type="NCBI Taxonomy" id="7370"/>
</organismHost>
<organismHost>
    <name type="scientific">Simuliidae</name>
    <name type="common">black flies</name>
    <dbReference type="NCBI Taxonomy" id="7190"/>
</organismHost>
<organismHost>
    <name type="scientific">Sus scrofa</name>
    <name type="common">Pig</name>
    <dbReference type="NCBI Taxonomy" id="9823"/>
</organismHost>
<comment type="function">
    <text evidence="1">Seems to stimulates transcription by the viral polymerase (PubMed:8610460). May play a role in viral pathogenesis or transmission by insects vectors.</text>
</comment>
<comment type="alternative products">
    <event type="alternative initiation"/>
    <isoform>
        <id>P0C2X2-1</id>
        <name>C'</name>
        <sequence type="displayed"/>
    </isoform>
    <isoform>
        <id>P0C2X2-2</id>
        <name>C</name>
        <sequence type="described" ref="VSP_025749"/>
    </isoform>
</comment>
<comment type="miscellaneous">
    <text>The P gene has two overlapping open reading frames. One encodes the P protein and the other the C'/C proteins.</text>
</comment>
<comment type="similarity">
    <text evidence="2">Belongs to the rhabdoviruses C protein family.</text>
</comment>
<accession>P0C2X2</accession>